<feature type="initiator methionine" description="Removed" evidence="2">
    <location>
        <position position="1"/>
    </location>
</feature>
<feature type="chain" id="PRO_0000107882" description="Phosphocarrier protein HPr">
    <location>
        <begin position="2"/>
        <end position="93"/>
    </location>
</feature>
<feature type="domain" description="HPr" evidence="1">
    <location>
        <begin position="2"/>
        <end position="89"/>
    </location>
</feature>
<feature type="active site" description="Pros-phosphohistidine intermediate">
    <location>
        <position position="15"/>
    </location>
</feature>
<feature type="mutagenesis site" description="Loss of phosphorylation." evidence="2">
    <original>H</original>
    <variation>A</variation>
    <location>
        <position position="15"/>
    </location>
</feature>
<comment type="function">
    <text>General (non sugar-specific) component of the phosphoenolpyruvate-dependent sugar phosphotransferase system (sugar PTS). This major carbohydrate active-transport system catalyzes the phosphorylation of incoming sugar substrates concomitantly with their translocation across the cell membrane. The phosphoryl group from phosphoenolpyruvate (PEP) is transferred to the phosphoryl carrier protein HPr by enzyme I. Phospho-HPr then transfers it to the PTS EIIA domain.</text>
</comment>
<comment type="subcellular location">
    <subcellularLocation>
        <location>Cytoplasm</location>
    </subcellularLocation>
</comment>
<comment type="similarity">
    <text evidence="3">Belongs to the HPr family.</text>
</comment>
<gene>
    <name type="primary">ptsH</name>
    <name type="ordered locus">SCO5841</name>
    <name type="ORF">SC9B10.08c</name>
</gene>
<evidence type="ECO:0000255" key="1">
    <source>
        <dbReference type="PROSITE-ProRule" id="PRU00681"/>
    </source>
</evidence>
<evidence type="ECO:0000269" key="2">
    <source>
    </source>
</evidence>
<evidence type="ECO:0000305" key="3"/>
<proteinExistence type="evidence at protein level"/>
<accession>O50515</accession>
<protein>
    <recommendedName>
        <fullName>Phosphocarrier protein HPr</fullName>
    </recommendedName>
    <alternativeName>
        <fullName>Histidine-containing protein</fullName>
    </alternativeName>
</protein>
<keyword id="KW-0963">Cytoplasm</keyword>
<keyword id="KW-0903">Direct protein sequencing</keyword>
<keyword id="KW-0598">Phosphotransferase system</keyword>
<keyword id="KW-1185">Reference proteome</keyword>
<keyword id="KW-0762">Sugar transport</keyword>
<keyword id="KW-0813">Transport</keyword>
<sequence>MAERRVNVGWAEGLHARPASIFVRAATATGVPVTIAKADGSPVNAASMLAVLGLGAQGGEEIVLASDAEGAEAALERLAKLVAEGLEELPETV</sequence>
<reference key="1">
    <citation type="journal article" date="2002" name="Nature">
        <title>Complete genome sequence of the model actinomycete Streptomyces coelicolor A3(2).</title>
        <authorList>
            <person name="Bentley S.D."/>
            <person name="Chater K.F."/>
            <person name="Cerdeno-Tarraga A.-M."/>
            <person name="Challis G.L."/>
            <person name="Thomson N.R."/>
            <person name="James K.D."/>
            <person name="Harris D.E."/>
            <person name="Quail M.A."/>
            <person name="Kieser H."/>
            <person name="Harper D."/>
            <person name="Bateman A."/>
            <person name="Brown S."/>
            <person name="Chandra G."/>
            <person name="Chen C.W."/>
            <person name="Collins M."/>
            <person name="Cronin A."/>
            <person name="Fraser A."/>
            <person name="Goble A."/>
            <person name="Hidalgo J."/>
            <person name="Hornsby T."/>
            <person name="Howarth S."/>
            <person name="Huang C.-H."/>
            <person name="Kieser T."/>
            <person name="Larke L."/>
            <person name="Murphy L.D."/>
            <person name="Oliver K."/>
            <person name="O'Neil S."/>
            <person name="Rabbinowitsch E."/>
            <person name="Rajandream M.A."/>
            <person name="Rutherford K.M."/>
            <person name="Rutter S."/>
            <person name="Seeger K."/>
            <person name="Saunders D."/>
            <person name="Sharp S."/>
            <person name="Squares R."/>
            <person name="Squares S."/>
            <person name="Taylor K."/>
            <person name="Warren T."/>
            <person name="Wietzorrek A."/>
            <person name="Woodward J.R."/>
            <person name="Barrell B.G."/>
            <person name="Parkhill J."/>
            <person name="Hopwood D.A."/>
        </authorList>
    </citation>
    <scope>NUCLEOTIDE SEQUENCE [LARGE SCALE GENOMIC DNA]</scope>
    <source>
        <strain>ATCC BAA-471 / A3(2) / M145</strain>
    </source>
</reference>
<reference key="2">
    <citation type="journal article" date="1999" name="Eur. J. Biochem.">
        <title>The phosphotransferase system (PTS) of Streptomyces coelicolor identification and biochemical analysis of a histidine phosphocarrier protein HPr encoded by the gene ptsH.</title>
        <authorList>
            <person name="Parche S."/>
            <person name="Schmid R."/>
            <person name="Titgemeyer F."/>
        </authorList>
    </citation>
    <scope>PROTEIN SEQUENCE OF 2-19</scope>
    <scope>CHARACTERIZATION</scope>
    <scope>MUTAGENESIS OF HIS-15</scope>
    <source>
        <strain>ATCC BAA-471 / A3(2) / M145</strain>
    </source>
</reference>
<organism>
    <name type="scientific">Streptomyces coelicolor (strain ATCC BAA-471 / A3(2) / M145)</name>
    <dbReference type="NCBI Taxonomy" id="100226"/>
    <lineage>
        <taxon>Bacteria</taxon>
        <taxon>Bacillati</taxon>
        <taxon>Actinomycetota</taxon>
        <taxon>Actinomycetes</taxon>
        <taxon>Kitasatosporales</taxon>
        <taxon>Streptomycetaceae</taxon>
        <taxon>Streptomyces</taxon>
        <taxon>Streptomyces albidoflavus group</taxon>
    </lineage>
</organism>
<name>PTHP_STRCO</name>
<dbReference type="EMBL" id="AL939125">
    <property type="protein sequence ID" value="CAA15798.1"/>
    <property type="molecule type" value="Genomic_DNA"/>
</dbReference>
<dbReference type="PIR" id="T35877">
    <property type="entry name" value="T35877"/>
</dbReference>
<dbReference type="RefSeq" id="NP_629964.1">
    <property type="nucleotide sequence ID" value="NC_003888.3"/>
</dbReference>
<dbReference type="RefSeq" id="WP_003973180.1">
    <property type="nucleotide sequence ID" value="NZ_VNID01000007.1"/>
</dbReference>
<dbReference type="SMR" id="O50515"/>
<dbReference type="STRING" id="100226.gene:17763501"/>
<dbReference type="TCDB" id="8.A.8.1.7">
    <property type="family name" value="the phosphotransferase system hpr (hpr) family"/>
</dbReference>
<dbReference type="PaxDb" id="100226-SCO5841"/>
<dbReference type="KEGG" id="sco:SCO5841"/>
<dbReference type="PATRIC" id="fig|100226.15.peg.5938"/>
<dbReference type="eggNOG" id="COG1925">
    <property type="taxonomic scope" value="Bacteria"/>
</dbReference>
<dbReference type="HOGENOM" id="CLU_136230_3_2_11"/>
<dbReference type="InParanoid" id="O50515"/>
<dbReference type="OrthoDB" id="9809047at2"/>
<dbReference type="PhylomeDB" id="O50515"/>
<dbReference type="Proteomes" id="UP000001973">
    <property type="component" value="Chromosome"/>
</dbReference>
<dbReference type="GO" id="GO:0005737">
    <property type="term" value="C:cytoplasm"/>
    <property type="evidence" value="ECO:0007669"/>
    <property type="project" value="UniProtKB-SubCell"/>
</dbReference>
<dbReference type="GO" id="GO:0009401">
    <property type="term" value="P:phosphoenolpyruvate-dependent sugar phosphotransferase system"/>
    <property type="evidence" value="ECO:0000315"/>
    <property type="project" value="CACAO"/>
</dbReference>
<dbReference type="CDD" id="cd00367">
    <property type="entry name" value="PTS-HPr_like"/>
    <property type="match status" value="1"/>
</dbReference>
<dbReference type="FunFam" id="3.30.1340.10:FF:000004">
    <property type="entry name" value="HPr family phosphocarrier"/>
    <property type="match status" value="1"/>
</dbReference>
<dbReference type="Gene3D" id="3.30.1340.10">
    <property type="entry name" value="HPr-like"/>
    <property type="match status" value="1"/>
</dbReference>
<dbReference type="InterPro" id="IPR050399">
    <property type="entry name" value="HPr"/>
</dbReference>
<dbReference type="InterPro" id="IPR000032">
    <property type="entry name" value="HPr-like"/>
</dbReference>
<dbReference type="InterPro" id="IPR035895">
    <property type="entry name" value="HPr-like_sf"/>
</dbReference>
<dbReference type="InterPro" id="IPR001020">
    <property type="entry name" value="PTS_HPr_His_P_site"/>
</dbReference>
<dbReference type="NCBIfam" id="TIGR01003">
    <property type="entry name" value="PTS_HPr_family"/>
    <property type="match status" value="1"/>
</dbReference>
<dbReference type="PANTHER" id="PTHR33705">
    <property type="entry name" value="PHOSPHOCARRIER PROTEIN HPR"/>
    <property type="match status" value="1"/>
</dbReference>
<dbReference type="PANTHER" id="PTHR33705:SF2">
    <property type="entry name" value="PHOSPHOCARRIER PROTEIN NPR"/>
    <property type="match status" value="1"/>
</dbReference>
<dbReference type="Pfam" id="PF00381">
    <property type="entry name" value="PTS-HPr"/>
    <property type="match status" value="1"/>
</dbReference>
<dbReference type="PRINTS" id="PR00107">
    <property type="entry name" value="PHOSPHOCPHPR"/>
</dbReference>
<dbReference type="SUPFAM" id="SSF55594">
    <property type="entry name" value="HPr-like"/>
    <property type="match status" value="1"/>
</dbReference>
<dbReference type="PROSITE" id="PS51350">
    <property type="entry name" value="PTS_HPR_DOM"/>
    <property type="match status" value="1"/>
</dbReference>
<dbReference type="PROSITE" id="PS00369">
    <property type="entry name" value="PTS_HPR_HIS"/>
    <property type="match status" value="1"/>
</dbReference>